<name>STAN_DROME</name>
<dbReference type="EMBL" id="AF172329">
    <property type="protein sequence ID" value="AAF02618.1"/>
    <property type="molecule type" value="mRNA"/>
</dbReference>
<dbReference type="EMBL" id="AB028498">
    <property type="protein sequence ID" value="BAA84069.1"/>
    <property type="molecule type" value="mRNA"/>
</dbReference>
<dbReference type="EMBL" id="AE013599">
    <property type="protein sequence ID" value="AAF58763.5"/>
    <property type="molecule type" value="Genomic_DNA"/>
</dbReference>
<dbReference type="RefSeq" id="NP_001163113.1">
    <molecule id="Q9V5N8-2"/>
    <property type="nucleotide sequence ID" value="NM_001169642.1"/>
</dbReference>
<dbReference type="RefSeq" id="NP_001188903.1">
    <molecule id="Q9V5N8-1"/>
    <property type="nucleotide sequence ID" value="NM_001201974.2"/>
</dbReference>
<dbReference type="RefSeq" id="NP_001246257.1">
    <molecule id="Q9V5N8-2"/>
    <property type="nucleotide sequence ID" value="NM_001259328.2"/>
</dbReference>
<dbReference type="RefSeq" id="NP_724962.3">
    <molecule id="Q9V5N8-1"/>
    <property type="nucleotide sequence ID" value="NM_165794.4"/>
</dbReference>
<dbReference type="SMR" id="Q9V5N8"/>
<dbReference type="BioGRID" id="61934">
    <property type="interactions" value="25"/>
</dbReference>
<dbReference type="FunCoup" id="Q9V5N8">
    <property type="interactions" value="170"/>
</dbReference>
<dbReference type="IntAct" id="Q9V5N8">
    <property type="interactions" value="3"/>
</dbReference>
<dbReference type="STRING" id="7227.FBpp0303451"/>
<dbReference type="GlyCosmos" id="Q9V5N8">
    <property type="glycosylation" value="20 sites, No reported glycans"/>
</dbReference>
<dbReference type="GlyGen" id="Q9V5N8">
    <property type="glycosylation" value="22 sites"/>
</dbReference>
<dbReference type="iPTMnet" id="Q9V5N8"/>
<dbReference type="PaxDb" id="7227-FBpp0292315"/>
<dbReference type="EnsemblMetazoa" id="FBtr0088214">
    <molecule id="Q9V5N8-1"/>
    <property type="protein sequence ID" value="FBpp0087309"/>
    <property type="gene ID" value="FBgn0024836"/>
</dbReference>
<dbReference type="EnsemblMetazoa" id="FBtr0300578">
    <molecule id="Q9V5N8-2"/>
    <property type="protein sequence ID" value="FBpp0289805"/>
    <property type="gene ID" value="FBgn0024836"/>
</dbReference>
<dbReference type="EnsemblMetazoa" id="FBtr0303223">
    <molecule id="Q9V5N8-1"/>
    <property type="protein sequence ID" value="FBpp0292315"/>
    <property type="gene ID" value="FBgn0024836"/>
</dbReference>
<dbReference type="EnsemblMetazoa" id="FBtr0304899">
    <molecule id="Q9V5N8-2"/>
    <property type="protein sequence ID" value="FBpp0293438"/>
    <property type="gene ID" value="FBgn0024836"/>
</dbReference>
<dbReference type="GeneID" id="36125"/>
<dbReference type="KEGG" id="dme:Dmel_CG11895"/>
<dbReference type="AGR" id="FB:FBgn0024836"/>
<dbReference type="CTD" id="36125"/>
<dbReference type="FlyBase" id="FBgn0024836">
    <property type="gene designation" value="stan"/>
</dbReference>
<dbReference type="VEuPathDB" id="VectorBase:FBgn0024836"/>
<dbReference type="eggNOG" id="KOG4289">
    <property type="taxonomic scope" value="Eukaryota"/>
</dbReference>
<dbReference type="GeneTree" id="ENSGT00940000168029"/>
<dbReference type="InParanoid" id="Q9V5N8"/>
<dbReference type="OMA" id="TEVYTVI"/>
<dbReference type="OrthoDB" id="26203at2759"/>
<dbReference type="PhylomeDB" id="Q9V5N8"/>
<dbReference type="Reactome" id="R-DME-350368">
    <property type="pathway name" value="Activation of RHO1 by FZ:DSH complex"/>
</dbReference>
<dbReference type="Reactome" id="R-DME-350376">
    <property type="pathway name" value="Activation of RAC1:GTP by FZ:DSH complex"/>
</dbReference>
<dbReference type="Reactome" id="R-DME-350379">
    <property type="pathway name" value="Homo-/heterophilic binding of transmembrane components"/>
</dbReference>
<dbReference type="Reactome" id="R-DME-350411">
    <property type="pathway name" value="Formation and asymmetric localisation of transmembrane complexes"/>
</dbReference>
<dbReference type="Reactome" id="R-DME-350480">
    <property type="pathway name" value="Activation of non-muscle Myosin II"/>
</dbReference>
<dbReference type="Reactome" id="R-DME-450728">
    <property type="pathway name" value="Inhibition of actin polymerization"/>
</dbReference>
<dbReference type="SignaLink" id="Q9V5N8"/>
<dbReference type="BioGRID-ORCS" id="36125">
    <property type="hits" value="0 hits in 3 CRISPR screens"/>
</dbReference>
<dbReference type="GenomeRNAi" id="36125"/>
<dbReference type="PRO" id="PR:Q9V5N8"/>
<dbReference type="Proteomes" id="UP000000803">
    <property type="component" value="Chromosome 2R"/>
</dbReference>
<dbReference type="Bgee" id="FBgn0024836">
    <property type="expression patterns" value="Expressed in transmedullary neuron Tm1 (Drosophila) in insect head and 76 other cell types or tissues"/>
</dbReference>
<dbReference type="ExpressionAtlas" id="Q9V5N8">
    <property type="expression patterns" value="baseline and differential"/>
</dbReference>
<dbReference type="GO" id="GO:0016324">
    <property type="term" value="C:apical plasma membrane"/>
    <property type="evidence" value="ECO:0000314"/>
    <property type="project" value="FlyBase"/>
</dbReference>
<dbReference type="GO" id="GO:0005911">
    <property type="term" value="C:cell-cell junction"/>
    <property type="evidence" value="ECO:0000314"/>
    <property type="project" value="FlyBase"/>
</dbReference>
<dbReference type="GO" id="GO:0016020">
    <property type="term" value="C:membrane"/>
    <property type="evidence" value="ECO:0000255"/>
    <property type="project" value="FlyBase"/>
</dbReference>
<dbReference type="GO" id="GO:0005886">
    <property type="term" value="C:plasma membrane"/>
    <property type="evidence" value="ECO:0000304"/>
    <property type="project" value="Reactome"/>
</dbReference>
<dbReference type="GO" id="GO:0005509">
    <property type="term" value="F:calcium ion binding"/>
    <property type="evidence" value="ECO:0007669"/>
    <property type="project" value="InterPro"/>
</dbReference>
<dbReference type="GO" id="GO:0050839">
    <property type="term" value="F:cell adhesion molecule binding"/>
    <property type="evidence" value="ECO:0000250"/>
    <property type="project" value="FlyBase"/>
</dbReference>
<dbReference type="GO" id="GO:0004930">
    <property type="term" value="F:G protein-coupled receptor activity"/>
    <property type="evidence" value="ECO:0007669"/>
    <property type="project" value="UniProtKB-KW"/>
</dbReference>
<dbReference type="GO" id="GO:0004888">
    <property type="term" value="F:transmembrane signaling receptor activity"/>
    <property type="evidence" value="ECO:0000303"/>
    <property type="project" value="UniProtKB"/>
</dbReference>
<dbReference type="GO" id="GO:0007411">
    <property type="term" value="P:axon guidance"/>
    <property type="evidence" value="ECO:0000315"/>
    <property type="project" value="FlyBase"/>
</dbReference>
<dbReference type="GO" id="GO:0007409">
    <property type="term" value="P:axonogenesis"/>
    <property type="evidence" value="ECO:0000315"/>
    <property type="project" value="FlyBase"/>
</dbReference>
<dbReference type="GO" id="GO:0016339">
    <property type="term" value="P:calcium-dependent cell-cell adhesion via plasma membrane cell adhesion molecules"/>
    <property type="evidence" value="ECO:0000315"/>
    <property type="project" value="UniProtKB"/>
</dbReference>
<dbReference type="GO" id="GO:0007166">
    <property type="term" value="P:cell surface receptor signaling pathway"/>
    <property type="evidence" value="ECO:0007669"/>
    <property type="project" value="InterPro"/>
</dbReference>
<dbReference type="GO" id="GO:0098609">
    <property type="term" value="P:cell-cell adhesion"/>
    <property type="evidence" value="ECO:0000318"/>
    <property type="project" value="GO_Central"/>
</dbReference>
<dbReference type="GO" id="GO:0016358">
    <property type="term" value="P:dendrite development"/>
    <property type="evidence" value="ECO:0000270"/>
    <property type="project" value="UniProtKB"/>
</dbReference>
<dbReference type="GO" id="GO:0048813">
    <property type="term" value="P:dendrite morphogenesis"/>
    <property type="evidence" value="ECO:0000315"/>
    <property type="project" value="FlyBase"/>
</dbReference>
<dbReference type="GO" id="GO:0070593">
    <property type="term" value="P:dendrite self-avoidance"/>
    <property type="evidence" value="ECO:0000315"/>
    <property type="project" value="FlyBase"/>
</dbReference>
<dbReference type="GO" id="GO:0001737">
    <property type="term" value="P:establishment of imaginal disc-derived wing hair orientation"/>
    <property type="evidence" value="ECO:0000316"/>
    <property type="project" value="FlyBase"/>
</dbReference>
<dbReference type="GO" id="GO:0042067">
    <property type="term" value="P:establishment of ommatidial planar polarity"/>
    <property type="evidence" value="ECO:0000315"/>
    <property type="project" value="FlyBase"/>
</dbReference>
<dbReference type="GO" id="GO:0001736">
    <property type="term" value="P:establishment of planar polarity"/>
    <property type="evidence" value="ECO:0000315"/>
    <property type="project" value="FlyBase"/>
</dbReference>
<dbReference type="GO" id="GO:0007156">
    <property type="term" value="P:homophilic cell adhesion via plasma membrane adhesion molecules"/>
    <property type="evidence" value="ECO:0000314"/>
    <property type="project" value="FlyBase"/>
</dbReference>
<dbReference type="GO" id="GO:0001738">
    <property type="term" value="P:morphogenesis of a polarized epithelium"/>
    <property type="evidence" value="ECO:0000315"/>
    <property type="project" value="FlyBase"/>
</dbReference>
<dbReference type="GO" id="GO:0016319">
    <property type="term" value="P:mushroom body development"/>
    <property type="evidence" value="ECO:0000315"/>
    <property type="project" value="FlyBase"/>
</dbReference>
<dbReference type="GO" id="GO:0016318">
    <property type="term" value="P:ommatidial rotation"/>
    <property type="evidence" value="ECO:0000315"/>
    <property type="project" value="FlyBase"/>
</dbReference>
<dbReference type="GO" id="GO:0045773">
    <property type="term" value="P:positive regulation of axon extension"/>
    <property type="evidence" value="ECO:0000316"/>
    <property type="project" value="FlyBase"/>
</dbReference>
<dbReference type="GO" id="GO:1902669">
    <property type="term" value="P:positive regulation of axon guidance"/>
    <property type="evidence" value="ECO:0000315"/>
    <property type="project" value="FlyBase"/>
</dbReference>
<dbReference type="GO" id="GO:0048057">
    <property type="term" value="P:R3/R4 development"/>
    <property type="evidence" value="ECO:0000315"/>
    <property type="project" value="FlyBase"/>
</dbReference>
<dbReference type="GO" id="GO:0050770">
    <property type="term" value="P:regulation of axonogenesis"/>
    <property type="evidence" value="ECO:0000314"/>
    <property type="project" value="FlyBase"/>
</dbReference>
<dbReference type="GO" id="GO:0051963">
    <property type="term" value="P:regulation of synapse assembly"/>
    <property type="evidence" value="ECO:0000314"/>
    <property type="project" value="FlyBase"/>
</dbReference>
<dbReference type="GO" id="GO:0035159">
    <property type="term" value="P:regulation of tube length, open tracheal system"/>
    <property type="evidence" value="ECO:0000315"/>
    <property type="project" value="FlyBase"/>
</dbReference>
<dbReference type="GO" id="GO:0007367">
    <property type="term" value="P:segment polarity determination"/>
    <property type="evidence" value="ECO:0000315"/>
    <property type="project" value="UniProtKB"/>
</dbReference>
<dbReference type="CDD" id="cd15441">
    <property type="entry name" value="7tmB2_CELSR_Adhesion_IV"/>
    <property type="match status" value="1"/>
</dbReference>
<dbReference type="CDD" id="cd11304">
    <property type="entry name" value="Cadherin_repeat"/>
    <property type="match status" value="8"/>
</dbReference>
<dbReference type="CDD" id="cd00054">
    <property type="entry name" value="EGF_CA"/>
    <property type="match status" value="2"/>
</dbReference>
<dbReference type="CDD" id="cd00055">
    <property type="entry name" value="EGF_Lam"/>
    <property type="match status" value="1"/>
</dbReference>
<dbReference type="CDD" id="cd00110">
    <property type="entry name" value="LamG"/>
    <property type="match status" value="2"/>
</dbReference>
<dbReference type="FunFam" id="1.20.1070.10:FF:000202">
    <property type="entry name" value="Cadherin EGF LAG seven-pass G-type receptor"/>
    <property type="match status" value="1"/>
</dbReference>
<dbReference type="FunFam" id="2.10.25.10:FF:000011">
    <property type="entry name" value="Cadherin EGF LAG seven-pass G-type receptor"/>
    <property type="match status" value="1"/>
</dbReference>
<dbReference type="FunFam" id="2.60.120.200:FF:000173">
    <property type="entry name" value="Cadherin EGF LAG seven-pass G-type receptor"/>
    <property type="match status" value="1"/>
</dbReference>
<dbReference type="FunFam" id="2.60.40.60:FF:000013">
    <property type="entry name" value="Cadherin EGF LAG seven-pass G-type receptor"/>
    <property type="match status" value="1"/>
</dbReference>
<dbReference type="FunFam" id="4.10.1240.10:FF:000021">
    <property type="entry name" value="Cadherin EGF LAG seven-pass G-type receptor"/>
    <property type="match status" value="1"/>
</dbReference>
<dbReference type="FunFam" id="2.60.120.200:FF:000059">
    <property type="entry name" value="Cadherin EGF LAG seven-pass G-type receptor 1"/>
    <property type="match status" value="1"/>
</dbReference>
<dbReference type="FunFam" id="2.170.300.10:FF:000011">
    <property type="entry name" value="cadherin EGF LAG seven-pass G-type receptor 1"/>
    <property type="match status" value="1"/>
</dbReference>
<dbReference type="FunFam" id="2.60.40.60:FF:000029">
    <property type="entry name" value="Cadherin EGF LAG seven-pass G-type receptor 3"/>
    <property type="match status" value="1"/>
</dbReference>
<dbReference type="FunFam" id="2.60.40.60:FF:000038">
    <property type="entry name" value="Cadherin EGF LAG seven-pass G-type receptor 3"/>
    <property type="match status" value="1"/>
</dbReference>
<dbReference type="FunFam" id="2.60.40.60:FF:000044">
    <property type="entry name" value="Cadherin, EGF LAG seven-pass G-type receptor 3"/>
    <property type="match status" value="1"/>
</dbReference>
<dbReference type="FunFam" id="2.60.40.60:FF:000020">
    <property type="entry name" value="Dachsous cadherin-related 1b"/>
    <property type="match status" value="2"/>
</dbReference>
<dbReference type="FunFam" id="2.10.25.10:FF:000012">
    <property type="entry name" value="Delta-like protein"/>
    <property type="match status" value="1"/>
</dbReference>
<dbReference type="FunFam" id="2.60.40.60:FF:000249">
    <property type="entry name" value="Starry night"/>
    <property type="match status" value="1"/>
</dbReference>
<dbReference type="FunFam" id="2.60.40.60:FF:000239">
    <property type="entry name" value="Starry night, isoform B"/>
    <property type="match status" value="1"/>
</dbReference>
<dbReference type="FunFam" id="2.60.40.60:FF:000256">
    <property type="entry name" value="Starry night, isoform B"/>
    <property type="match status" value="1"/>
</dbReference>
<dbReference type="FunFam" id="2.60.220.50:FF:000031">
    <property type="entry name" value="Starry night, isoform F"/>
    <property type="match status" value="1"/>
</dbReference>
<dbReference type="FunFam" id="2.10.25.10:FF:000634">
    <property type="entry name" value="Starry night, isoform G"/>
    <property type="match status" value="1"/>
</dbReference>
<dbReference type="Gene3D" id="2.60.120.200">
    <property type="match status" value="2"/>
</dbReference>
<dbReference type="Gene3D" id="2.60.220.50">
    <property type="match status" value="1"/>
</dbReference>
<dbReference type="Gene3D" id="2.60.40.60">
    <property type="entry name" value="Cadherins"/>
    <property type="match status" value="9"/>
</dbReference>
<dbReference type="Gene3D" id="4.10.1240.10">
    <property type="entry name" value="GPCR, family 2, extracellular hormone receptor domain"/>
    <property type="match status" value="1"/>
</dbReference>
<dbReference type="Gene3D" id="2.10.25.10">
    <property type="entry name" value="Laminin"/>
    <property type="match status" value="2"/>
</dbReference>
<dbReference type="Gene3D" id="1.20.1070.10">
    <property type="entry name" value="Rhodopsin 7-helix transmembrane proteins"/>
    <property type="match status" value="1"/>
</dbReference>
<dbReference type="Gene3D" id="2.170.300.10">
    <property type="entry name" value="Tie2 ligand-binding domain superfamily"/>
    <property type="match status" value="1"/>
</dbReference>
<dbReference type="InterPro" id="IPR002126">
    <property type="entry name" value="Cadherin-like_dom"/>
</dbReference>
<dbReference type="InterPro" id="IPR015919">
    <property type="entry name" value="Cadherin-like_sf"/>
</dbReference>
<dbReference type="InterPro" id="IPR056286">
    <property type="entry name" value="Cadherin_CELSR1-3_9th"/>
</dbReference>
<dbReference type="InterPro" id="IPR020894">
    <property type="entry name" value="Cadherin_CS"/>
</dbReference>
<dbReference type="InterPro" id="IPR013320">
    <property type="entry name" value="ConA-like_dom_sf"/>
</dbReference>
<dbReference type="InterPro" id="IPR001881">
    <property type="entry name" value="EGF-like_Ca-bd_dom"/>
</dbReference>
<dbReference type="InterPro" id="IPR000742">
    <property type="entry name" value="EGF-like_dom"/>
</dbReference>
<dbReference type="InterPro" id="IPR057244">
    <property type="entry name" value="GAIN_B"/>
</dbReference>
<dbReference type="InterPro" id="IPR032471">
    <property type="entry name" value="GAIN_dom_N"/>
</dbReference>
<dbReference type="InterPro" id="IPR046338">
    <property type="entry name" value="GAIN_dom_sf"/>
</dbReference>
<dbReference type="InterPro" id="IPR017981">
    <property type="entry name" value="GPCR_2-like_7TM"/>
</dbReference>
<dbReference type="InterPro" id="IPR036445">
    <property type="entry name" value="GPCR_2_extracell_dom_sf"/>
</dbReference>
<dbReference type="InterPro" id="IPR001879">
    <property type="entry name" value="GPCR_2_extracellular_dom"/>
</dbReference>
<dbReference type="InterPro" id="IPR000832">
    <property type="entry name" value="GPCR_2_secretin-like"/>
</dbReference>
<dbReference type="InterPro" id="IPR000203">
    <property type="entry name" value="GPS"/>
</dbReference>
<dbReference type="InterPro" id="IPR001791">
    <property type="entry name" value="Laminin_G"/>
</dbReference>
<dbReference type="InterPro" id="IPR002049">
    <property type="entry name" value="LE_dom"/>
</dbReference>
<dbReference type="PANTHER" id="PTHR24026">
    <property type="entry name" value="FAT ATYPICAL CADHERIN-RELATED"/>
    <property type="match status" value="1"/>
</dbReference>
<dbReference type="PANTHER" id="PTHR24026:SF51">
    <property type="entry name" value="PROTOCADHERIN-LIKE WING POLARITY PROTEIN STAN"/>
    <property type="match status" value="1"/>
</dbReference>
<dbReference type="Pfam" id="PF00002">
    <property type="entry name" value="7tm_2"/>
    <property type="match status" value="1"/>
</dbReference>
<dbReference type="Pfam" id="PF00028">
    <property type="entry name" value="Cadherin"/>
    <property type="match status" value="8"/>
</dbReference>
<dbReference type="Pfam" id="PF23592">
    <property type="entry name" value="Cadherin_CELSR2_9th"/>
    <property type="match status" value="1"/>
</dbReference>
<dbReference type="Pfam" id="PF00008">
    <property type="entry name" value="EGF"/>
    <property type="match status" value="2"/>
</dbReference>
<dbReference type="Pfam" id="PF00053">
    <property type="entry name" value="EGF_laminin"/>
    <property type="match status" value="1"/>
</dbReference>
<dbReference type="Pfam" id="PF16489">
    <property type="entry name" value="GAIN"/>
    <property type="match status" value="1"/>
</dbReference>
<dbReference type="Pfam" id="PF02210">
    <property type="entry name" value="Laminin_G_2"/>
    <property type="match status" value="2"/>
</dbReference>
<dbReference type="PRINTS" id="PR00205">
    <property type="entry name" value="CADHERIN"/>
</dbReference>
<dbReference type="PRINTS" id="PR00249">
    <property type="entry name" value="GPCRSECRETIN"/>
</dbReference>
<dbReference type="SMART" id="SM00112">
    <property type="entry name" value="CA"/>
    <property type="match status" value="8"/>
</dbReference>
<dbReference type="SMART" id="SM00181">
    <property type="entry name" value="EGF"/>
    <property type="match status" value="5"/>
</dbReference>
<dbReference type="SMART" id="SM00179">
    <property type="entry name" value="EGF_CA"/>
    <property type="match status" value="2"/>
</dbReference>
<dbReference type="SMART" id="SM00180">
    <property type="entry name" value="EGF_Lam"/>
    <property type="match status" value="1"/>
</dbReference>
<dbReference type="SMART" id="SM00303">
    <property type="entry name" value="GPS"/>
    <property type="match status" value="1"/>
</dbReference>
<dbReference type="SMART" id="SM00008">
    <property type="entry name" value="HormR"/>
    <property type="match status" value="1"/>
</dbReference>
<dbReference type="SMART" id="SM00282">
    <property type="entry name" value="LamG"/>
    <property type="match status" value="2"/>
</dbReference>
<dbReference type="SUPFAM" id="SSF49313">
    <property type="entry name" value="Cadherin-like"/>
    <property type="match status" value="9"/>
</dbReference>
<dbReference type="SUPFAM" id="SSF49899">
    <property type="entry name" value="Concanavalin A-like lectins/glucanases"/>
    <property type="match status" value="2"/>
</dbReference>
<dbReference type="SUPFAM" id="SSF57196">
    <property type="entry name" value="EGF/Laminin"/>
    <property type="match status" value="2"/>
</dbReference>
<dbReference type="SUPFAM" id="SSF81321">
    <property type="entry name" value="Family A G protein-coupled receptor-like"/>
    <property type="match status" value="1"/>
</dbReference>
<dbReference type="PROSITE" id="PS00232">
    <property type="entry name" value="CADHERIN_1"/>
    <property type="match status" value="6"/>
</dbReference>
<dbReference type="PROSITE" id="PS50268">
    <property type="entry name" value="CADHERIN_2"/>
    <property type="match status" value="8"/>
</dbReference>
<dbReference type="PROSITE" id="PS00022">
    <property type="entry name" value="EGF_1"/>
    <property type="match status" value="4"/>
</dbReference>
<dbReference type="PROSITE" id="PS01186">
    <property type="entry name" value="EGF_2"/>
    <property type="match status" value="3"/>
</dbReference>
<dbReference type="PROSITE" id="PS50026">
    <property type="entry name" value="EGF_3"/>
    <property type="match status" value="3"/>
</dbReference>
<dbReference type="PROSITE" id="PS01248">
    <property type="entry name" value="EGF_LAM_1"/>
    <property type="match status" value="1"/>
</dbReference>
<dbReference type="PROSITE" id="PS50027">
    <property type="entry name" value="EGF_LAM_2"/>
    <property type="match status" value="1"/>
</dbReference>
<dbReference type="PROSITE" id="PS50227">
    <property type="entry name" value="G_PROTEIN_RECEP_F2_3"/>
    <property type="match status" value="1"/>
</dbReference>
<dbReference type="PROSITE" id="PS50261">
    <property type="entry name" value="G_PROTEIN_RECEP_F2_4"/>
    <property type="match status" value="1"/>
</dbReference>
<dbReference type="PROSITE" id="PS50221">
    <property type="entry name" value="GAIN_B"/>
    <property type="match status" value="1"/>
</dbReference>
<dbReference type="PROSITE" id="PS50025">
    <property type="entry name" value="LAM_G_DOMAIN"/>
    <property type="match status" value="2"/>
</dbReference>
<proteinExistence type="evidence at protein level"/>
<accession>Q9V5N8</accession>
<comment type="function">
    <text evidence="9 10 12">Involved in the fz signaling pathway that controls wing tissue polarity. Also mediates homophilic cell adhesion. May play a role in initiating prehair morphogenesis. May play a critical role in tissue polarity and in formation of normal dendrite fields. During planar cell polarity, stabilizes asymmetric PCP domains together with ATP6AP2 (PubMed:23292348).</text>
</comment>
<comment type="subunit">
    <text evidence="12">Interacts with ATP6AP2 (via N-terminus).</text>
</comment>
<comment type="interaction">
    <interactant intactId="EBI-119250">
        <id>Q9V5N8</id>
    </interactant>
    <interactant intactId="EBI-251576">
        <id>P18537</id>
        <label>fz</label>
    </interactant>
    <organismsDiffer>false</organismsDiffer>
    <experiments>3</experiments>
</comment>
<comment type="subcellular location">
    <subcellularLocation>
        <location evidence="9">Cell membrane</location>
        <topology evidence="9">Multi-pass membrane protein</topology>
    </subcellularLocation>
    <subcellularLocation>
        <location evidence="12">Apical cell membrane</location>
    </subcellularLocation>
    <text evidence="12">Co-localizes at the apical junctions with ATP6AP2.</text>
</comment>
<comment type="alternative products">
    <event type="alternative splicing"/>
    <isoform>
        <id>Q9V5N8-1</id>
        <name>A</name>
        <sequence type="displayed"/>
    </isoform>
    <isoform>
        <id>Q9V5N8-2</id>
        <name>B</name>
        <sequence type="described" ref="VSP_036911"/>
    </isoform>
</comment>
<comment type="tissue specificity">
    <text evidence="10">In the pupal wing, expressed at relatively even levels in all regions. Abundant in 6-9 hours embryos. Expressed at higher levels in pupae than larvae.</text>
</comment>
<comment type="developmental stage">
    <text evidence="10">At 12 hours after puparium formation (apf), expressed evenly at cell boundaries. By 30 hours apf, expression is concentrated at proximal and distal cell boundaries with little or no expression at anterior and posterior boundaries. When prehairs emerge at 30-36 hours apf, expression becomes evenly distributed again along the whole cell boundary.</text>
</comment>
<comment type="similarity">
    <text evidence="14">Belongs to the G-protein coupled receptor 2 family.</text>
</comment>
<reference key="1">
    <citation type="journal article" date="1999" name="Development">
        <title>The Drosophila tissue polarity gene starry night encodes a member of the protocadherin family.</title>
        <authorList>
            <person name="Chae J.W."/>
            <person name="Kim M.-J."/>
            <person name="Goo J.H."/>
            <person name="Collier S."/>
            <person name="Gubb D."/>
            <person name="Charlton J."/>
            <person name="Adler P.N."/>
            <person name="Park W.J."/>
        </authorList>
    </citation>
    <scope>NUCLEOTIDE SEQUENCE [MRNA] (ISOFORM A)</scope>
    <scope>FUNCTION</scope>
    <scope>TISSUE SPECIFICITY</scope>
    <scope>DEVELOPMENTAL STAGE</scope>
    <source>
        <tissue>Embryo</tissue>
    </source>
</reference>
<reference key="2">
    <citation type="journal article" date="1999" name="Cell">
        <title>Flamingo, a seven-pass transmembrane cadherin, regulates planar cell polarity under the control of frizzled.</title>
        <authorList>
            <person name="Usui T."/>
            <person name="Shima Y."/>
            <person name="Shimada Y."/>
            <person name="Hirano S."/>
            <person name="Burgess R.W."/>
            <person name="Schwarz T.L."/>
            <person name="Takeichi M."/>
            <person name="Uemura T."/>
        </authorList>
    </citation>
    <scope>NUCLEOTIDE SEQUENCE [MRNA] (ISOFORM B)</scope>
    <scope>FUNCTION</scope>
    <scope>SUBCELLULAR LOCATION</scope>
</reference>
<reference key="3">
    <citation type="journal article" date="2000" name="Science">
        <title>The genome sequence of Drosophila melanogaster.</title>
        <authorList>
            <person name="Adams M.D."/>
            <person name="Celniker S.E."/>
            <person name="Holt R.A."/>
            <person name="Evans C.A."/>
            <person name="Gocayne J.D."/>
            <person name="Amanatides P.G."/>
            <person name="Scherer S.E."/>
            <person name="Li P.W."/>
            <person name="Hoskins R.A."/>
            <person name="Galle R.F."/>
            <person name="George R.A."/>
            <person name="Lewis S.E."/>
            <person name="Richards S."/>
            <person name="Ashburner M."/>
            <person name="Henderson S.N."/>
            <person name="Sutton G.G."/>
            <person name="Wortman J.R."/>
            <person name="Yandell M.D."/>
            <person name="Zhang Q."/>
            <person name="Chen L.X."/>
            <person name="Brandon R.C."/>
            <person name="Rogers Y.-H.C."/>
            <person name="Blazej R.G."/>
            <person name="Champe M."/>
            <person name="Pfeiffer B.D."/>
            <person name="Wan K.H."/>
            <person name="Doyle C."/>
            <person name="Baxter E.G."/>
            <person name="Helt G."/>
            <person name="Nelson C.R."/>
            <person name="Miklos G.L.G."/>
            <person name="Abril J.F."/>
            <person name="Agbayani A."/>
            <person name="An H.-J."/>
            <person name="Andrews-Pfannkoch C."/>
            <person name="Baldwin D."/>
            <person name="Ballew R.M."/>
            <person name="Basu A."/>
            <person name="Baxendale J."/>
            <person name="Bayraktaroglu L."/>
            <person name="Beasley E.M."/>
            <person name="Beeson K.Y."/>
            <person name="Benos P.V."/>
            <person name="Berman B.P."/>
            <person name="Bhandari D."/>
            <person name="Bolshakov S."/>
            <person name="Borkova D."/>
            <person name="Botchan M.R."/>
            <person name="Bouck J."/>
            <person name="Brokstein P."/>
            <person name="Brottier P."/>
            <person name="Burtis K.C."/>
            <person name="Busam D.A."/>
            <person name="Butler H."/>
            <person name="Cadieu E."/>
            <person name="Center A."/>
            <person name="Chandra I."/>
            <person name="Cherry J.M."/>
            <person name="Cawley S."/>
            <person name="Dahlke C."/>
            <person name="Davenport L.B."/>
            <person name="Davies P."/>
            <person name="de Pablos B."/>
            <person name="Delcher A."/>
            <person name="Deng Z."/>
            <person name="Mays A.D."/>
            <person name="Dew I."/>
            <person name="Dietz S.M."/>
            <person name="Dodson K."/>
            <person name="Doup L.E."/>
            <person name="Downes M."/>
            <person name="Dugan-Rocha S."/>
            <person name="Dunkov B.C."/>
            <person name="Dunn P."/>
            <person name="Durbin K.J."/>
            <person name="Evangelista C.C."/>
            <person name="Ferraz C."/>
            <person name="Ferriera S."/>
            <person name="Fleischmann W."/>
            <person name="Fosler C."/>
            <person name="Gabrielian A.E."/>
            <person name="Garg N.S."/>
            <person name="Gelbart W.M."/>
            <person name="Glasser K."/>
            <person name="Glodek A."/>
            <person name="Gong F."/>
            <person name="Gorrell J.H."/>
            <person name="Gu Z."/>
            <person name="Guan P."/>
            <person name="Harris M."/>
            <person name="Harris N.L."/>
            <person name="Harvey D.A."/>
            <person name="Heiman T.J."/>
            <person name="Hernandez J.R."/>
            <person name="Houck J."/>
            <person name="Hostin D."/>
            <person name="Houston K.A."/>
            <person name="Howland T.J."/>
            <person name="Wei M.-H."/>
            <person name="Ibegwam C."/>
            <person name="Jalali M."/>
            <person name="Kalush F."/>
            <person name="Karpen G.H."/>
            <person name="Ke Z."/>
            <person name="Kennison J.A."/>
            <person name="Ketchum K.A."/>
            <person name="Kimmel B.E."/>
            <person name="Kodira C.D."/>
            <person name="Kraft C.L."/>
            <person name="Kravitz S."/>
            <person name="Kulp D."/>
            <person name="Lai Z."/>
            <person name="Lasko P."/>
            <person name="Lei Y."/>
            <person name="Levitsky A.A."/>
            <person name="Li J.H."/>
            <person name="Li Z."/>
            <person name="Liang Y."/>
            <person name="Lin X."/>
            <person name="Liu X."/>
            <person name="Mattei B."/>
            <person name="McIntosh T.C."/>
            <person name="McLeod M.P."/>
            <person name="McPherson D."/>
            <person name="Merkulov G."/>
            <person name="Milshina N.V."/>
            <person name="Mobarry C."/>
            <person name="Morris J."/>
            <person name="Moshrefi A."/>
            <person name="Mount S.M."/>
            <person name="Moy M."/>
            <person name="Murphy B."/>
            <person name="Murphy L."/>
            <person name="Muzny D.M."/>
            <person name="Nelson D.L."/>
            <person name="Nelson D.R."/>
            <person name="Nelson K.A."/>
            <person name="Nixon K."/>
            <person name="Nusskern D.R."/>
            <person name="Pacleb J.M."/>
            <person name="Palazzolo M."/>
            <person name="Pittman G.S."/>
            <person name="Pan S."/>
            <person name="Pollard J."/>
            <person name="Puri V."/>
            <person name="Reese M.G."/>
            <person name="Reinert K."/>
            <person name="Remington K."/>
            <person name="Saunders R.D.C."/>
            <person name="Scheeler F."/>
            <person name="Shen H."/>
            <person name="Shue B.C."/>
            <person name="Siden-Kiamos I."/>
            <person name="Simpson M."/>
            <person name="Skupski M.P."/>
            <person name="Smith T.J."/>
            <person name="Spier E."/>
            <person name="Spradling A.C."/>
            <person name="Stapleton M."/>
            <person name="Strong R."/>
            <person name="Sun E."/>
            <person name="Svirskas R."/>
            <person name="Tector C."/>
            <person name="Turner R."/>
            <person name="Venter E."/>
            <person name="Wang A.H."/>
            <person name="Wang X."/>
            <person name="Wang Z.-Y."/>
            <person name="Wassarman D.A."/>
            <person name="Weinstock G.M."/>
            <person name="Weissenbach J."/>
            <person name="Williams S.M."/>
            <person name="Woodage T."/>
            <person name="Worley K.C."/>
            <person name="Wu D."/>
            <person name="Yang S."/>
            <person name="Yao Q.A."/>
            <person name="Ye J."/>
            <person name="Yeh R.-F."/>
            <person name="Zaveri J.S."/>
            <person name="Zhan M."/>
            <person name="Zhang G."/>
            <person name="Zhao Q."/>
            <person name="Zheng L."/>
            <person name="Zheng X.H."/>
            <person name="Zhong F.N."/>
            <person name="Zhong W."/>
            <person name="Zhou X."/>
            <person name="Zhu S.C."/>
            <person name="Zhu X."/>
            <person name="Smith H.O."/>
            <person name="Gibbs R.A."/>
            <person name="Myers E.W."/>
            <person name="Rubin G.M."/>
            <person name="Venter J.C."/>
        </authorList>
    </citation>
    <scope>NUCLEOTIDE SEQUENCE [LARGE SCALE GENOMIC DNA]</scope>
    <source>
        <strain>Berkeley</strain>
    </source>
</reference>
<reference key="4">
    <citation type="journal article" date="2002" name="Genome Biol.">
        <title>Annotation of the Drosophila melanogaster euchromatic genome: a systematic review.</title>
        <authorList>
            <person name="Misra S."/>
            <person name="Crosby M.A."/>
            <person name="Mungall C.J."/>
            <person name="Matthews B.B."/>
            <person name="Campbell K.S."/>
            <person name="Hradecky P."/>
            <person name="Huang Y."/>
            <person name="Kaminker J.S."/>
            <person name="Millburn G.H."/>
            <person name="Prochnik S.E."/>
            <person name="Smith C.D."/>
            <person name="Tupy J.L."/>
            <person name="Whitfield E.J."/>
            <person name="Bayraktaroglu L."/>
            <person name="Berman B.P."/>
            <person name="Bettencourt B.R."/>
            <person name="Celniker S.E."/>
            <person name="de Grey A.D.N.J."/>
            <person name="Drysdale R.A."/>
            <person name="Harris N.L."/>
            <person name="Richter J."/>
            <person name="Russo S."/>
            <person name="Schroeder A.J."/>
            <person name="Shu S.Q."/>
            <person name="Stapleton M."/>
            <person name="Yamada C."/>
            <person name="Ashburner M."/>
            <person name="Gelbart W.M."/>
            <person name="Rubin G.M."/>
            <person name="Lewis S.E."/>
        </authorList>
    </citation>
    <scope>GENOME REANNOTATION</scope>
    <source>
        <strain>Berkeley</strain>
    </source>
</reference>
<reference key="5">
    <citation type="journal article" date="2008" name="J. Proteome Res.">
        <title>Phosphoproteome analysis of Drosophila melanogaster embryos.</title>
        <authorList>
            <person name="Zhai B."/>
            <person name="Villen J."/>
            <person name="Beausoleil S.A."/>
            <person name="Mintseris J."/>
            <person name="Gygi S.P."/>
        </authorList>
    </citation>
    <scope>PHOSPHORYLATION [LARGE SCALE ANALYSIS] AT SER-3199 AND SER-3200</scope>
    <scope>IDENTIFICATION BY MASS SPECTROMETRY</scope>
    <source>
        <tissue>Embryo</tissue>
    </source>
</reference>
<reference key="6">
    <citation type="journal article" date="2013" name="EMBO J.">
        <title>Drosophila ATP6AP2/VhaPRR functions both as a novel planar cell polarity core protein and a regulator of endosomal trafficking.</title>
        <authorList>
            <person name="Hermle T."/>
            <person name="Guida M.C."/>
            <person name="Beck S."/>
            <person name="Helmstaedter S."/>
            <person name="Simons M."/>
        </authorList>
    </citation>
    <scope>FUNCTION</scope>
    <scope>INTERACTION WITH ATP6AP2</scope>
    <scope>SUBCELLULAR LOCATION</scope>
</reference>
<feature type="signal peptide" evidence="2">
    <location>
        <begin position="1"/>
        <end position="29"/>
    </location>
</feature>
<feature type="chain" id="PRO_0000012921" description="Protocadherin-like wing polarity protein stan">
    <location>
        <begin position="30"/>
        <end position="3579"/>
    </location>
</feature>
<feature type="topological domain" description="Extracellular" evidence="2">
    <location>
        <begin position="30"/>
        <end position="2816"/>
    </location>
</feature>
<feature type="transmembrane region" description="Helical; Name=1" evidence="2">
    <location>
        <begin position="2817"/>
        <end position="2837"/>
    </location>
</feature>
<feature type="topological domain" description="Cytoplasmic" evidence="2">
    <location>
        <begin position="2838"/>
        <end position="2845"/>
    </location>
</feature>
<feature type="transmembrane region" description="Helical; Name=2" evidence="2">
    <location>
        <begin position="2846"/>
        <end position="2866"/>
    </location>
</feature>
<feature type="topological domain" description="Extracellular" evidence="2">
    <location>
        <begin position="2867"/>
        <end position="2883"/>
    </location>
</feature>
<feature type="transmembrane region" description="Helical; Name=3" evidence="2">
    <location>
        <begin position="2884"/>
        <end position="2904"/>
    </location>
</feature>
<feature type="topological domain" description="Cytoplasmic" evidence="2">
    <location>
        <begin position="2905"/>
        <end position="2919"/>
    </location>
</feature>
<feature type="transmembrane region" description="Helical; Name=4" evidence="2">
    <location>
        <begin position="2920"/>
        <end position="2940"/>
    </location>
</feature>
<feature type="topological domain" description="Extracellular" evidence="2">
    <location>
        <begin position="2941"/>
        <end position="2959"/>
    </location>
</feature>
<feature type="transmembrane region" description="Helical; Name=5" evidence="2">
    <location>
        <begin position="2960"/>
        <end position="2980"/>
    </location>
</feature>
<feature type="topological domain" description="Cytoplasmic" evidence="2">
    <location>
        <begin position="2981"/>
        <end position="3000"/>
    </location>
</feature>
<feature type="transmembrane region" description="Helical; Name=6" evidence="2">
    <location>
        <begin position="3001"/>
        <end position="3021"/>
    </location>
</feature>
<feature type="topological domain" description="Extracellular" evidence="2">
    <location>
        <begin position="3022"/>
        <end position="3031"/>
    </location>
</feature>
<feature type="transmembrane region" description="Helical; Name=7" evidence="2">
    <location>
        <begin position="3032"/>
        <end position="3052"/>
    </location>
</feature>
<feature type="topological domain" description="Cytoplasmic" evidence="2">
    <location>
        <begin position="3053"/>
        <end position="3579"/>
    </location>
</feature>
<feature type="domain" description="Cadherin 1" evidence="3">
    <location>
        <begin position="360"/>
        <end position="464"/>
    </location>
</feature>
<feature type="domain" description="Cadherin 2" evidence="3">
    <location>
        <begin position="465"/>
        <end position="581"/>
    </location>
</feature>
<feature type="domain" description="Cadherin 3" evidence="3">
    <location>
        <begin position="582"/>
        <end position="689"/>
    </location>
</feature>
<feature type="domain" description="Cadherin 4" evidence="3">
    <location>
        <begin position="690"/>
        <end position="794"/>
    </location>
</feature>
<feature type="domain" description="Cadherin 5" evidence="3">
    <location>
        <begin position="795"/>
        <end position="897"/>
    </location>
</feature>
<feature type="domain" description="Cadherin 6" evidence="3">
    <location>
        <begin position="898"/>
        <end position="1007"/>
    </location>
</feature>
<feature type="domain" description="Cadherin 7" evidence="3">
    <location>
        <begin position="1008"/>
        <end position="1113"/>
    </location>
</feature>
<feature type="domain" description="Cadherin 8" evidence="3">
    <location>
        <begin position="1114"/>
        <end position="1220"/>
    </location>
</feature>
<feature type="domain" description="EGF-like 1; calcium-binding" evidence="4">
    <location>
        <begin position="1482"/>
        <end position="1518"/>
    </location>
</feature>
<feature type="domain" description="Laminin G-like 1" evidence="6">
    <location>
        <begin position="1556"/>
        <end position="1753"/>
    </location>
</feature>
<feature type="domain" description="EGF-like 2; calcium-binding" evidence="4">
    <location>
        <begin position="1756"/>
        <end position="1792"/>
    </location>
</feature>
<feature type="domain" description="Laminin G-like 2" evidence="6">
    <location>
        <begin position="1796"/>
        <end position="1963"/>
    </location>
</feature>
<feature type="domain" description="EGF-like 3; calcium-binding" evidence="4">
    <location>
        <begin position="1965"/>
        <end position="2000"/>
    </location>
</feature>
<feature type="domain" description="Laminin EGF-like" evidence="7">
    <location>
        <begin position="2095"/>
        <end position="2142"/>
    </location>
</feature>
<feature type="domain" description="GAIN-B" evidence="5">
    <location>
        <begin position="2653"/>
        <end position="2803"/>
    </location>
</feature>
<feature type="region of interest" description="Disordered" evidence="8">
    <location>
        <begin position="2553"/>
        <end position="2582"/>
    </location>
</feature>
<feature type="region of interest" description="Disordered" evidence="8">
    <location>
        <begin position="2610"/>
        <end position="2635"/>
    </location>
</feature>
<feature type="region of interest" description="Disordered" evidence="8">
    <location>
        <begin position="2654"/>
        <end position="2684"/>
    </location>
</feature>
<feature type="region of interest" description="GPS" evidence="5">
    <location>
        <begin position="2747"/>
        <end position="2803"/>
    </location>
</feature>
<feature type="region of interest" description="Disordered" evidence="8">
    <location>
        <begin position="3111"/>
        <end position="3225"/>
    </location>
</feature>
<feature type="region of interest" description="Disordered" evidence="8">
    <location>
        <begin position="3343"/>
        <end position="3377"/>
    </location>
</feature>
<feature type="region of interest" description="Disordered" evidence="8">
    <location>
        <begin position="3458"/>
        <end position="3486"/>
    </location>
</feature>
<feature type="region of interest" description="Disordered" evidence="8">
    <location>
        <begin position="3499"/>
        <end position="3579"/>
    </location>
</feature>
<feature type="compositionally biased region" description="Basic and acidic residues" evidence="8">
    <location>
        <begin position="2553"/>
        <end position="2562"/>
    </location>
</feature>
<feature type="compositionally biased region" description="Low complexity" evidence="8">
    <location>
        <begin position="2567"/>
        <end position="2579"/>
    </location>
</feature>
<feature type="compositionally biased region" description="Low complexity" evidence="8">
    <location>
        <begin position="3113"/>
        <end position="3128"/>
    </location>
</feature>
<feature type="compositionally biased region" description="Basic and acidic residues" evidence="8">
    <location>
        <begin position="3167"/>
        <end position="3191"/>
    </location>
</feature>
<feature type="compositionally biased region" description="Polar residues" evidence="8">
    <location>
        <begin position="3208"/>
        <end position="3223"/>
    </location>
</feature>
<feature type="compositionally biased region" description="Basic and acidic residues" evidence="8">
    <location>
        <begin position="3343"/>
        <end position="3352"/>
    </location>
</feature>
<feature type="compositionally biased region" description="Low complexity" evidence="8">
    <location>
        <begin position="3459"/>
        <end position="3468"/>
    </location>
</feature>
<feature type="compositionally biased region" description="Basic and acidic residues" evidence="8">
    <location>
        <begin position="3469"/>
        <end position="3482"/>
    </location>
</feature>
<feature type="compositionally biased region" description="Polar residues" evidence="8">
    <location>
        <begin position="3501"/>
        <end position="3513"/>
    </location>
</feature>
<feature type="modified residue" description="Phosphoserine" evidence="11">
    <location>
        <position position="3199"/>
    </location>
</feature>
<feature type="modified residue" description="Phosphoserine" evidence="11">
    <location>
        <position position="3200"/>
    </location>
</feature>
<feature type="glycosylation site" description="N-linked (GlcNAc...) asparagine" evidence="2">
    <location>
        <position position="46"/>
    </location>
</feature>
<feature type="glycosylation site" description="N-linked (GlcNAc...) asparagine" evidence="2">
    <location>
        <position position="179"/>
    </location>
</feature>
<feature type="glycosylation site" description="N-linked (GlcNAc...) asparagine" evidence="2">
    <location>
        <position position="340"/>
    </location>
</feature>
<feature type="glycosylation site" description="N-linked (GlcNAc...) asparagine" evidence="2">
    <location>
        <position position="671"/>
    </location>
</feature>
<feature type="glycosylation site" description="N-linked (GlcNAc...) asparagine" evidence="2">
    <location>
        <position position="886"/>
    </location>
</feature>
<feature type="glycosylation site" description="N-linked (GlcNAc...) asparagine" evidence="2">
    <location>
        <position position="1269"/>
    </location>
</feature>
<feature type="glycosylation site" description="N-linked (GlcNAc...) asparagine" evidence="2">
    <location>
        <position position="1374"/>
    </location>
</feature>
<feature type="glycosylation site" description="N-linked (GlcNAc...) asparagine" evidence="2">
    <location>
        <position position="1441"/>
    </location>
</feature>
<feature type="glycosylation site" description="N-linked (GlcNAc...) asparagine" evidence="2">
    <location>
        <position position="1650"/>
    </location>
</feature>
<feature type="glycosylation site" description="N-linked (GlcNAc...) asparagine" evidence="2">
    <location>
        <position position="1678"/>
    </location>
</feature>
<feature type="glycosylation site" description="N-linked (GlcNAc...) asparagine" evidence="2">
    <location>
        <position position="1747"/>
    </location>
</feature>
<feature type="glycosylation site" description="N-linked (GlcNAc...) asparagine" evidence="2">
    <location>
        <position position="1843"/>
    </location>
</feature>
<feature type="glycosylation site" description="N-linked (GlcNAc...) asparagine" evidence="2">
    <location>
        <position position="1975"/>
    </location>
</feature>
<feature type="glycosylation site" description="N-linked (GlcNAc...) asparagine" evidence="2">
    <location>
        <position position="2016"/>
    </location>
</feature>
<feature type="glycosylation site" description="N-linked (GlcNAc...) asparagine" evidence="2">
    <location>
        <position position="2028"/>
    </location>
</feature>
<feature type="glycosylation site" description="N-linked (GlcNAc...) asparagine" evidence="2">
    <location>
        <position position="2071"/>
    </location>
</feature>
<feature type="glycosylation site" description="N-linked (GlcNAc...) asparagine" evidence="2">
    <location>
        <position position="2088"/>
    </location>
</feature>
<feature type="glycosylation site" description="N-linked (GlcNAc...) asparagine" evidence="2">
    <location>
        <position position="2196"/>
    </location>
</feature>
<feature type="glycosylation site" description="N-linked (GlcNAc...) asparagine" evidence="2">
    <location>
        <position position="2320"/>
    </location>
</feature>
<feature type="glycosylation site" description="N-linked (GlcNAc...) asparagine" evidence="2">
    <location>
        <position position="2784"/>
    </location>
</feature>
<feature type="disulfide bond" evidence="2">
    <location>
        <begin position="1486"/>
        <end position="1497"/>
    </location>
</feature>
<feature type="disulfide bond" evidence="2">
    <location>
        <begin position="1491"/>
        <end position="1506"/>
    </location>
</feature>
<feature type="disulfide bond" evidence="2">
    <location>
        <begin position="1508"/>
        <end position="1517"/>
    </location>
</feature>
<feature type="disulfide bond" evidence="1">
    <location>
        <begin position="1727"/>
        <end position="1753"/>
    </location>
</feature>
<feature type="disulfide bond" evidence="2">
    <location>
        <begin position="1760"/>
        <end position="1771"/>
    </location>
</feature>
<feature type="disulfide bond" evidence="2">
    <location>
        <begin position="1765"/>
        <end position="1780"/>
    </location>
</feature>
<feature type="disulfide bond" evidence="2">
    <location>
        <begin position="1782"/>
        <end position="1791"/>
    </location>
</feature>
<feature type="disulfide bond" evidence="1">
    <location>
        <begin position="1937"/>
        <end position="1963"/>
    </location>
</feature>
<feature type="disulfide bond" evidence="2">
    <location>
        <begin position="1969"/>
        <end position="1979"/>
    </location>
</feature>
<feature type="disulfide bond" evidence="2">
    <location>
        <begin position="1973"/>
        <end position="1988"/>
    </location>
</feature>
<feature type="disulfide bond" evidence="2">
    <location>
        <begin position="1990"/>
        <end position="1999"/>
    </location>
</feature>
<feature type="disulfide bond" evidence="2">
    <location>
        <begin position="2092"/>
        <end position="2095"/>
    </location>
</feature>
<feature type="disulfide bond" evidence="2">
    <location>
        <begin position="2097"/>
        <end position="2114"/>
    </location>
</feature>
<feature type="disulfide bond" evidence="2">
    <location>
        <begin position="2116"/>
        <end position="2125"/>
    </location>
</feature>
<feature type="disulfide bond" evidence="1">
    <location>
        <begin position="2128"/>
        <end position="2140"/>
    </location>
</feature>
<feature type="disulfide bond" evidence="5">
    <location>
        <begin position="2747"/>
        <end position="2785"/>
    </location>
</feature>
<feature type="disulfide bond" evidence="5">
    <location>
        <begin position="2762"/>
        <end position="2787"/>
    </location>
</feature>
<feature type="splice variant" id="VSP_036911" description="In isoform B." evidence="13">
    <original>ERNIDDDETTV</original>
    <variation>DSEAEY</variation>
    <location>
        <begin position="3569"/>
        <end position="3579"/>
    </location>
</feature>
<feature type="sequence conflict" description="In Ref. 1; AAF02618." evidence="14" ref="1">
    <original>T</original>
    <variation>S</variation>
    <location>
        <position position="181"/>
    </location>
</feature>
<feature type="sequence conflict" description="In Ref. 1; AAF02618." evidence="14" ref="1">
    <original>Q</original>
    <variation>L</variation>
    <location>
        <position position="361"/>
    </location>
</feature>
<feature type="sequence conflict" description="In Ref. 2; BAA84069." evidence="14" ref="2">
    <original>MVSLLDS</original>
    <variation>NGLTVGLP</variation>
    <location>
        <begin position="395"/>
        <end position="401"/>
    </location>
</feature>
<feature type="sequence conflict" description="In Ref. 1; AAF02618." evidence="14" ref="1">
    <original>Q</original>
    <variation>H</variation>
    <location>
        <position position="1968"/>
    </location>
</feature>
<feature type="sequence conflict" description="In Ref. 1; AAF02618." evidence="14" ref="1">
    <original>G</original>
    <variation>E</variation>
    <location>
        <position position="2271"/>
    </location>
</feature>
<feature type="sequence conflict" description="In Ref. 2; BAA84069." evidence="14" ref="2">
    <original>R</original>
    <variation>C</variation>
    <location>
        <position position="2502"/>
    </location>
</feature>
<feature type="sequence conflict" description="In Ref. 2; BAA84069." evidence="14" ref="2">
    <original>D</original>
    <variation>G</variation>
    <location>
        <position position="2627"/>
    </location>
</feature>
<feature type="sequence conflict" description="In Ref. 2; BAA84069." evidence="14" ref="2">
    <original>T</original>
    <variation>S</variation>
    <location>
        <position position="2709"/>
    </location>
</feature>
<feature type="sequence conflict" description="In Ref. 2; BAA84069." evidence="14" ref="2">
    <original>Q</original>
    <variation>R</variation>
    <location>
        <position position="2756"/>
    </location>
</feature>
<feature type="sequence conflict" description="In Ref. 1; AAF02618." evidence="14" ref="1">
    <original>C</original>
    <variation>Y</variation>
    <location>
        <position position="2901"/>
    </location>
</feature>
<feature type="sequence conflict" description="In Ref. 1; AAF02618." evidence="14" ref="1">
    <original>L</original>
    <variation>P</variation>
    <location>
        <position position="3098"/>
    </location>
</feature>
<organism>
    <name type="scientific">Drosophila melanogaster</name>
    <name type="common">Fruit fly</name>
    <dbReference type="NCBI Taxonomy" id="7227"/>
    <lineage>
        <taxon>Eukaryota</taxon>
        <taxon>Metazoa</taxon>
        <taxon>Ecdysozoa</taxon>
        <taxon>Arthropoda</taxon>
        <taxon>Hexapoda</taxon>
        <taxon>Insecta</taxon>
        <taxon>Pterygota</taxon>
        <taxon>Neoptera</taxon>
        <taxon>Endopterygota</taxon>
        <taxon>Diptera</taxon>
        <taxon>Brachycera</taxon>
        <taxon>Muscomorpha</taxon>
        <taxon>Ephydroidea</taxon>
        <taxon>Drosophilidae</taxon>
        <taxon>Drosophila</taxon>
        <taxon>Sophophora</taxon>
    </lineage>
</organism>
<sequence>MQTREFPQRPLGLLLVLLVVLLQSSLIKSYLIIVHEDTPPGTVIFNASVYKLGSERHYKINAHKSANFVHHLVSVNHKDGQIQLRKALKCDGIYYPNLFTFYVDSTSNRLRSIDYYSLPVRIFVSGHSCNEDRRIEQELHHHHYEEEDNTGYSKRRRRRSTQEMIQLNGNQLEEVFRQNSTEFRAGDLIFGDSFDNEMRHRILSRKRRAVGSPDPLHLQPALHRRISDAKQWISETYASYAIHTTDKWNQICLRRSQFINSLNAFLPRSVCQHCKVSFLDVNDERFAIEHQSRDLVASRDVCIAESMWKVSITFNIRCDRRDIVDSDHRLKIVYHHQEFNDTDIARRVRRELRNQSPYFEQALYVASVLEEQPAGAAVTTVRARDPEDSPVVYSMVSLLDSRSQSLFKVDSRTGVVTTSASLDRELMDVHYFRVVATDDSFPPRSGTTTLQVNVLDCNDHSPTFEAEQFEASIREGATVGSTVITLRATDQDIGKNAEIEYGIEAVTDGAGLAQDQEMPIFRIDSRSGVISTRSSLDRETSDSYHLLVTAADLASAQSERRTATASVQVKVLDDNDNYPQFSERTYTVQVPEDQWGGTEDNTVAHIRATDADQGNNAAIRYAIIGGNTQSQFSIDSMSGDVSLVKPLDYESVRSYRLVIRAQDGGSPSRSNTTQLLVNVIDANDNAPRFYTSQFQESVLENVPVGYNIIRVQAYDSDEGANAEITYSISERDDNFPLAVDPRTGWVQTIKPLDREEQGRFAFQVVAKDGGVPPKSASSSVVITVQDVNDNDPAFNPKYYEANVGEDQPPGTPVTTVTATDPDEDSRLHYEITTGNTRGRFAITSQNGRGLITIAQSLDYKQEKRFLLTVAATDSGGRSDTATVHINITDANNFAPIFENAPYSASVFEDAPVGTTVLVVSATDSDVGVNAQITYSLNEESINGLGSPDPFSINPQTGAIVTNAPLDRETTSGYLLTVTAKDGGNPSLSDTTDVEIGVTDVNDNAPAFKSPLYQASILEDALVGTSVIQVAASDPDVGLNGRIKYLLSDRDIEDGSFVIDPTSGTIRTNKGLDRESVAVFHLTAIAVDKGSPPLSSTVEVQIRLEDVNDSPPTFASDKITLYVPENSPVGSVVGEIHAHDPDEGVNAVVHYSIIGGDDSNAFSLVTRPGSERAQLLTMTELDYESTRKRFELVVRAASPPLRNDAHIEILVTDVNDNAPVLRDFQVIFNNFRDHFPSGEIGRIPAFDADVSDKLHYRILSGNNANLLRLNSSSGGLVLSPQLNTNVPKFATMEVSVSDGINEAKAIMQLSVRLITEDMLFNSVTVRLNEMTEEAFLSPLLNFFLDGLAAIIPCPKEHIFVFSIQDDTDVSSRILNVSFSARRPDVSHEEFYTPQYLQERVYLNRAILARLATVEVLPFDDNLCVREPCLNFEECLTVLKFGNASEFIHSDTVLFRPIYPVNTFACSCPEGFTGSKEHYLCDTEVDLCYSDPCQNGGTCVRREGGYTCVCPSTHTGQNCETGVGHLRPCPSETCEGGLSCLSNYPSSQPPPYTATCELRARAFGRNSFLTFESLKQRHRFNLKLRFATVQENGLLLYNGRYNELHDFIALEIHEGHVSFSFSLGDHSERISVIQEAKVSDGKWHQVEVVYLNRSVTLVLDNCDTAIALSGQLGDRWSCANRTTLKLDKRCSLLTETCHRFLDLTGPLQVGGLPRIPAHFPVTNRDFVGCISDLRIDDRFVDLNSYVADNGTLAGCPQKAPLCQSEPCFNGGTCREGWGTYSCECPEGYAGNSCQDNIPAPWRFSGDGSLSFNPLLRPIQLPWTTSFSLRTRQKEAFLLQIQIGQNSSAAVCLRQGVLYYIFDGEPMYLAGAFLSDGEWHRVEIRWQQGSEIHFSVDYGQRSGSVPMSQKVQGLYVGKIVMGSPDGSIGAVPEASPFEGCIQDVRIGAGQSVLSRPTIRENVEDGCESRAQCPDHCPNHSSCQSSWDLSTCECDSGYVGTDCAPICTVRPCASGVCRANTSLPRGYDCECNSSSRHGDYCEKELQQPCPGGWWGERVCGPCRCDLAQGYHPDCNKTTGQCYCKTNHYQPPNETACLSCDCYSIGSFSGACNPLTGQCECREGVIGRRCDSCSNPYAEVTLSGCEVVYDACPRSFAGGVWWPRTPLGGVAIEGCPPPARGKGQRSCDVQSGSWNTPDMYNCTSEPFVELRRQLSQLEKLELELNSFVAIKMAEQLRKACEAVDRRGASKDQKISGNGRPNRRYKMESSFLLSNGGNVWSHELEMDYLSDELKFTHDRLYGADLLVTEGLLQELINYELMQSGLNLSHSQDKYFIKNLVDAASVILDRKYEAEWRRATELIQRGPDDLVDAFNKYLVVLARSQHDTYTSPFEIVQPNMALGLDIVTTESLFGYEPEQLSEYHRSKYLKPNAFTTESVVLPDTSGFLQHSARQRPVISFPKYNNYILDRRKFDQHTKVLVPLEMLGITPPESDEISQSGRRGSSHDHRAIVAYAQYKDVGQLLPDLYDETITRRWGVDVELATPILSLQILVPSMEREQETQRLEIPSRKIFSSSSPSSSSSSGSTEQQFVEVFDVPKAPTSSSEQQIEDIRITAHEIPPPVSSVEQQEASSDEDGEEREPHIRLNLDDIEFHGNSGEEVISPDSPEMLNPNYEGVSSTGSDEQPKGENEAVYRDRRLVKRQVEITYPSEQMQQTEQVVYRSLGSPHLAQPIKLQMWLDVDSARFGPRSNPQCVRWNSFTNQWTRLGCQTEIPDFDGDFNPAAQQAILVNCSCTHISSYAVIVDVIDPEDIPEPSLLVQITSYSAFLVSLPLLLGVLLALALLRGQQTNSNTIHQNIVLCVFCAELLFFVGMQSRRQLLESEFPCKLTAICLHYFWLAAFAWTTVDCVHLYRMLTEMRDINHGPMGFYFAMGYGAPAIVVGLSVGVRAHEYGNSLFCWLSVYEPVVWWLVGPIAGMSVVNLLILFVSVKAAFTLKDHVLGFGNLRTLLWLSVVSLPLMGVMWVLAVLAASEHSQLLSLLLSGVVLLHALFCLIGYCIINKRVRENLQRTCLRCMGRKVPLLDSSMVVSNSSHNVNAAARPSNFLASGYDTTTRRNIGISASSTTSRSTAKTSSSPYSDGQLRQTSTSTSNYNSASDAPSFLRGFESSTTGRSRGGEEKPSRRQRKDSDSGSETDGRSLELASSHSSDDDESRTARSSGTHRSTAVSSTPAYLPNITEHVQATTPPELNVVQSPQLFPSVNKPVYAPRWSSQLPDAYLQSPPNIGRWSQDTGSDNEHVHGQAKMTISPNPLPNPDLTDTSYLQQHHNKINMPPSILENIRDAREGYEDSLYGRRGEYPDKYGSYKPPSHYGSEKDYPGGGSGSQTIGHMRSFHPDAAYLSDNIYDKQRTLGSGYLGAKSESPYLSKDRITPDIYGSRDGHYSLKRQPAYATDSLHSVHSLLKNDYHQQQQQQQQHHLQDRLSEGSDKNGYHFPYTAEEDHLPARKLSHTQPPSLHGSQLMQPPGVGLVNDVNNPGLMGRHTLNGGSRHSSRASSPPSTMVAPMQPLGPLTSITDTERNIDDDETTV</sequence>
<protein>
    <recommendedName>
        <fullName>Protocadherin-like wing polarity protein stan</fullName>
    </recommendedName>
    <alternativeName>
        <fullName>Protein flamingo</fullName>
    </alternativeName>
    <alternativeName>
        <fullName>Protein starry night</fullName>
    </alternativeName>
</protein>
<evidence type="ECO:0000250" key="1"/>
<evidence type="ECO:0000255" key="2"/>
<evidence type="ECO:0000255" key="3">
    <source>
        <dbReference type="PROSITE-ProRule" id="PRU00043"/>
    </source>
</evidence>
<evidence type="ECO:0000255" key="4">
    <source>
        <dbReference type="PROSITE-ProRule" id="PRU00076"/>
    </source>
</evidence>
<evidence type="ECO:0000255" key="5">
    <source>
        <dbReference type="PROSITE-ProRule" id="PRU00098"/>
    </source>
</evidence>
<evidence type="ECO:0000255" key="6">
    <source>
        <dbReference type="PROSITE-ProRule" id="PRU00122"/>
    </source>
</evidence>
<evidence type="ECO:0000255" key="7">
    <source>
        <dbReference type="PROSITE-ProRule" id="PRU00460"/>
    </source>
</evidence>
<evidence type="ECO:0000256" key="8">
    <source>
        <dbReference type="SAM" id="MobiDB-lite"/>
    </source>
</evidence>
<evidence type="ECO:0000269" key="9">
    <source>
    </source>
</evidence>
<evidence type="ECO:0000269" key="10">
    <source>
    </source>
</evidence>
<evidence type="ECO:0000269" key="11">
    <source>
    </source>
</evidence>
<evidence type="ECO:0000269" key="12">
    <source>
    </source>
</evidence>
<evidence type="ECO:0000303" key="13">
    <source>
    </source>
</evidence>
<evidence type="ECO:0000305" key="14"/>
<keyword id="KW-0025">Alternative splicing</keyword>
<keyword id="KW-0106">Calcium</keyword>
<keyword id="KW-0130">Cell adhesion</keyword>
<keyword id="KW-1003">Cell membrane</keyword>
<keyword id="KW-0217">Developmental protein</keyword>
<keyword id="KW-1015">Disulfide bond</keyword>
<keyword id="KW-0245">EGF-like domain</keyword>
<keyword id="KW-0297">G-protein coupled receptor</keyword>
<keyword id="KW-0325">Glycoprotein</keyword>
<keyword id="KW-0424">Laminin EGF-like domain</keyword>
<keyword id="KW-0472">Membrane</keyword>
<keyword id="KW-0597">Phosphoprotein</keyword>
<keyword id="KW-0675">Receptor</keyword>
<keyword id="KW-1185">Reference proteome</keyword>
<keyword id="KW-0677">Repeat</keyword>
<keyword id="KW-0732">Signal</keyword>
<keyword id="KW-0807">Transducer</keyword>
<keyword id="KW-0812">Transmembrane</keyword>
<keyword id="KW-1133">Transmembrane helix</keyword>
<gene>
    <name type="primary">stan</name>
    <name type="synonym">fmi</name>
    <name type="ORF">CG11895</name>
</gene>